<organism>
    <name type="scientific">Escherichia coli O17:K52:H18 (strain UMN026 / ExPEC)</name>
    <dbReference type="NCBI Taxonomy" id="585056"/>
    <lineage>
        <taxon>Bacteria</taxon>
        <taxon>Pseudomonadati</taxon>
        <taxon>Pseudomonadota</taxon>
        <taxon>Gammaproteobacteria</taxon>
        <taxon>Enterobacterales</taxon>
        <taxon>Enterobacteriaceae</taxon>
        <taxon>Escherichia</taxon>
    </lineage>
</organism>
<proteinExistence type="inferred from homology"/>
<protein>
    <recommendedName>
        <fullName evidence="1">UPF0756 membrane protein YeaL</fullName>
    </recommendedName>
</protein>
<comment type="subcellular location">
    <subcellularLocation>
        <location evidence="1">Cell membrane</location>
        <topology evidence="1">Multi-pass membrane protein</topology>
    </subcellularLocation>
</comment>
<comment type="similarity">
    <text evidence="1">Belongs to the UPF0756 family.</text>
</comment>
<accession>B7NBD4</accession>
<dbReference type="EMBL" id="CU928163">
    <property type="protein sequence ID" value="CAR13274.1"/>
    <property type="molecule type" value="Genomic_DNA"/>
</dbReference>
<dbReference type="RefSeq" id="WP_000460707.1">
    <property type="nucleotide sequence ID" value="NC_011751.1"/>
</dbReference>
<dbReference type="RefSeq" id="YP_002412806.1">
    <property type="nucleotide sequence ID" value="NC_011751.1"/>
</dbReference>
<dbReference type="STRING" id="585056.ECUMN_2078"/>
<dbReference type="KEGG" id="eum:ECUMN_2078"/>
<dbReference type="PATRIC" id="fig|585056.7.peg.2265"/>
<dbReference type="HOGENOM" id="CLU_125889_0_0_6"/>
<dbReference type="Proteomes" id="UP000007097">
    <property type="component" value="Chromosome"/>
</dbReference>
<dbReference type="GO" id="GO:0005886">
    <property type="term" value="C:plasma membrane"/>
    <property type="evidence" value="ECO:0007669"/>
    <property type="project" value="UniProtKB-SubCell"/>
</dbReference>
<dbReference type="HAMAP" id="MF_01874">
    <property type="entry name" value="UPF0756"/>
    <property type="match status" value="1"/>
</dbReference>
<dbReference type="InterPro" id="IPR007382">
    <property type="entry name" value="UPF0756_TM"/>
</dbReference>
<dbReference type="PANTHER" id="PTHR38452">
    <property type="entry name" value="UPF0756 MEMBRANE PROTEIN YEAL"/>
    <property type="match status" value="1"/>
</dbReference>
<dbReference type="PANTHER" id="PTHR38452:SF1">
    <property type="entry name" value="UPF0756 MEMBRANE PROTEIN YEAL"/>
    <property type="match status" value="1"/>
</dbReference>
<dbReference type="Pfam" id="PF04284">
    <property type="entry name" value="DUF441"/>
    <property type="match status" value="1"/>
</dbReference>
<reference key="1">
    <citation type="journal article" date="2009" name="PLoS Genet.">
        <title>Organised genome dynamics in the Escherichia coli species results in highly diverse adaptive paths.</title>
        <authorList>
            <person name="Touchon M."/>
            <person name="Hoede C."/>
            <person name="Tenaillon O."/>
            <person name="Barbe V."/>
            <person name="Baeriswyl S."/>
            <person name="Bidet P."/>
            <person name="Bingen E."/>
            <person name="Bonacorsi S."/>
            <person name="Bouchier C."/>
            <person name="Bouvet O."/>
            <person name="Calteau A."/>
            <person name="Chiapello H."/>
            <person name="Clermont O."/>
            <person name="Cruveiller S."/>
            <person name="Danchin A."/>
            <person name="Diard M."/>
            <person name="Dossat C."/>
            <person name="Karoui M.E."/>
            <person name="Frapy E."/>
            <person name="Garry L."/>
            <person name="Ghigo J.M."/>
            <person name="Gilles A.M."/>
            <person name="Johnson J."/>
            <person name="Le Bouguenec C."/>
            <person name="Lescat M."/>
            <person name="Mangenot S."/>
            <person name="Martinez-Jehanne V."/>
            <person name="Matic I."/>
            <person name="Nassif X."/>
            <person name="Oztas S."/>
            <person name="Petit M.A."/>
            <person name="Pichon C."/>
            <person name="Rouy Z."/>
            <person name="Ruf C.S."/>
            <person name="Schneider D."/>
            <person name="Tourret J."/>
            <person name="Vacherie B."/>
            <person name="Vallenet D."/>
            <person name="Medigue C."/>
            <person name="Rocha E.P.C."/>
            <person name="Denamur E."/>
        </authorList>
    </citation>
    <scope>NUCLEOTIDE SEQUENCE [LARGE SCALE GENOMIC DNA]</scope>
    <source>
        <strain>UMN026 / ExPEC</strain>
    </source>
</reference>
<gene>
    <name evidence="1" type="primary">yeaL</name>
    <name type="ordered locus">ECUMN_2078</name>
</gene>
<feature type="chain" id="PRO_0000388867" description="UPF0756 membrane protein YeaL">
    <location>
        <begin position="1"/>
        <end position="148"/>
    </location>
</feature>
<feature type="transmembrane region" description="Helical" evidence="1">
    <location>
        <begin position="14"/>
        <end position="34"/>
    </location>
</feature>
<feature type="transmembrane region" description="Helical" evidence="1">
    <location>
        <begin position="51"/>
        <end position="71"/>
    </location>
</feature>
<feature type="transmembrane region" description="Helical" evidence="1">
    <location>
        <begin position="86"/>
        <end position="106"/>
    </location>
</feature>
<feature type="transmembrane region" description="Helical" evidence="1">
    <location>
        <begin position="121"/>
        <end position="141"/>
    </location>
</feature>
<evidence type="ECO:0000255" key="1">
    <source>
        <dbReference type="HAMAP-Rule" id="MF_01874"/>
    </source>
</evidence>
<keyword id="KW-1003">Cell membrane</keyword>
<keyword id="KW-0472">Membrane</keyword>
<keyword id="KW-0812">Transmembrane</keyword>
<keyword id="KW-1133">Transmembrane helix</keyword>
<name>YEAL_ECOLU</name>
<sequence>MFDVTLLILLGLAALGFISHNTTVAVSILVLIIVRVTPLSTFFPWIEKQGLSIGIIILTIGVMAPIASGTLPPSTLIHSFLNWKSLVAIAVGVIVSWLGGRGVTLMGSQPQLVAGLLVGTVLGVALFRGVPVGPLIAAGLVSLIVGKQ</sequence>